<reference key="1">
    <citation type="journal article" date="1993" name="Insect Biochem. Mol. Biol.">
        <title>Odorant binding proteins of Heliothis virescens.</title>
        <authorList>
            <person name="Krieger J."/>
            <person name="Ganssle H."/>
            <person name="Raming K."/>
            <person name="Breer H."/>
        </authorList>
    </citation>
    <scope>NUCLEOTIDE SEQUENCE [MRNA]</scope>
    <source>
        <tissue>Antenna</tissue>
    </source>
</reference>
<reference key="2">
    <citation type="submission" date="2005-03" db="EMBL/GenBank/DDBJ databases">
        <authorList>
            <person name="Krieger J."/>
        </authorList>
    </citation>
    <scope>SEQUENCE REVISION TO 10-15 AND 72</scope>
    <source>
        <tissue>Antenna</tissue>
    </source>
</reference>
<name>PBP_HELVI</name>
<keyword id="KW-1015">Disulfide bond</keyword>
<keyword id="KW-0589">Pheromone response</keyword>
<keyword id="KW-0590">Pheromone-binding</keyword>
<keyword id="KW-0732">Signal</keyword>
<keyword id="KW-0813">Transport</keyword>
<evidence type="ECO:0000250" key="1"/>
<evidence type="ECO:0000255" key="2"/>
<evidence type="ECO:0000305" key="3"/>
<comment type="function">
    <text evidence="1">This major soluble protein in olfactory sensilla of male moths might serve to solubilize the extremely hydrophobic pheromone molecules and to transport pheromone through the aqueous lymph to receptors located on olfactory cilia.</text>
</comment>
<comment type="tissue specificity">
    <text>Antenna.</text>
</comment>
<comment type="similarity">
    <text evidence="3">Belongs to the PBP/GOBP family.</text>
</comment>
<proteinExistence type="evidence at transcript level"/>
<accession>Q27388</accession>
<protein>
    <recommendedName>
        <fullName>Pheromone-binding protein</fullName>
        <shortName>PBP</shortName>
    </recommendedName>
</protein>
<organism>
    <name type="scientific">Heliothis virescens</name>
    <name type="common">Tobacco budworm moth</name>
    <dbReference type="NCBI Taxonomy" id="7102"/>
    <lineage>
        <taxon>Eukaryota</taxon>
        <taxon>Metazoa</taxon>
        <taxon>Ecdysozoa</taxon>
        <taxon>Arthropoda</taxon>
        <taxon>Hexapoda</taxon>
        <taxon>Insecta</taxon>
        <taxon>Pterygota</taxon>
        <taxon>Neoptera</taxon>
        <taxon>Endopterygota</taxon>
        <taxon>Lepidoptera</taxon>
        <taxon>Glossata</taxon>
        <taxon>Ditrysia</taxon>
        <taxon>Noctuoidea</taxon>
        <taxon>Noctuidae</taxon>
        <taxon>Heliothinae</taxon>
        <taxon>Heliothis</taxon>
    </lineage>
</organism>
<feature type="signal peptide" evidence="2">
    <location>
        <begin position="1"/>
        <end position="22"/>
    </location>
</feature>
<feature type="chain" id="PRO_0000012562" description="Pheromone-binding protein">
    <location>
        <begin position="23"/>
        <end position="163"/>
    </location>
</feature>
<feature type="disulfide bond" evidence="1">
    <location>
        <begin position="39"/>
        <end position="74"/>
    </location>
</feature>
<feature type="disulfide bond" evidence="1">
    <location>
        <begin position="70"/>
        <end position="129"/>
    </location>
</feature>
<feature type="disulfide bond" evidence="1">
    <location>
        <begin position="117"/>
        <end position="138"/>
    </location>
</feature>
<dbReference type="EMBL" id="X96861">
    <property type="protein sequence ID" value="CAA65604.2"/>
    <property type="molecule type" value="mRNA"/>
</dbReference>
<dbReference type="PIR" id="A56584">
    <property type="entry name" value="A56584"/>
</dbReference>
<dbReference type="SMR" id="Q27388"/>
<dbReference type="GO" id="GO:0005550">
    <property type="term" value="F:pheromone binding"/>
    <property type="evidence" value="ECO:0007669"/>
    <property type="project" value="UniProtKB-KW"/>
</dbReference>
<dbReference type="GO" id="GO:0019236">
    <property type="term" value="P:response to pheromone"/>
    <property type="evidence" value="ECO:0007669"/>
    <property type="project" value="UniProtKB-KW"/>
</dbReference>
<dbReference type="CDD" id="cd23992">
    <property type="entry name" value="PBP_GOBP"/>
    <property type="match status" value="1"/>
</dbReference>
<dbReference type="Gene3D" id="1.10.238.20">
    <property type="entry name" value="Pheromone/general odorant binding protein domain"/>
    <property type="match status" value="1"/>
</dbReference>
<dbReference type="InterPro" id="IPR006072">
    <property type="entry name" value="Odorant/phero-bd_Lep"/>
</dbReference>
<dbReference type="InterPro" id="IPR006170">
    <property type="entry name" value="PBP/GOBP"/>
</dbReference>
<dbReference type="InterPro" id="IPR036728">
    <property type="entry name" value="PBP_GOBP_sf"/>
</dbReference>
<dbReference type="Pfam" id="PF01395">
    <property type="entry name" value="PBP_GOBP"/>
    <property type="match status" value="1"/>
</dbReference>
<dbReference type="PIRSF" id="PIRSF015604">
    <property type="entry name" value="Odorant/phero_bd"/>
    <property type="match status" value="1"/>
</dbReference>
<dbReference type="PRINTS" id="PR00484">
    <property type="entry name" value="PBPGOBP"/>
</dbReference>
<dbReference type="SMART" id="SM00708">
    <property type="entry name" value="PhBP"/>
    <property type="match status" value="1"/>
</dbReference>
<dbReference type="SUPFAM" id="SSF47565">
    <property type="entry name" value="Insect pheromone/odorant-binding proteins"/>
    <property type="match status" value="1"/>
</dbReference>
<sequence>MMSVRLMLVVAVWLCLRVDASQDVMKNLSMNFAKPLEDCKKEMDLPDSVTTDFYNFWKEGYEFTNRHTGCAILCLSSKLELLDQEMKLHHGKAQEFAKKHGADDAMAKQLVDMIHGCSQSTPDATDDPCMKALNVAKCFKAKIHELNWAPSMELVVGEVLAEV</sequence>